<name>MOAC_GEOSW</name>
<evidence type="ECO:0000255" key="1">
    <source>
        <dbReference type="HAMAP-Rule" id="MF_01224"/>
    </source>
</evidence>
<evidence type="ECO:0000256" key="2">
    <source>
        <dbReference type="SAM" id="MobiDB-lite"/>
    </source>
</evidence>
<accession>C5D4E6</accession>
<sequence length="173" mass="18911">MSSFTHFNEQGRAKMVDITEKEDTIRVAVAQTSVTVNKEIYEKMTNRMIEKGDVLAVAQVAGIMAAKKTSDLIPMCHPLMLKGVDIQFAWHVEEEKALYQLLITVTVKTKGSTGVEMEALTAASVCALTVYDMCKALDKGMVIGPTYLVEKSGGKSGHYQRENSSVGGFANEQ</sequence>
<keyword id="KW-0456">Lyase</keyword>
<keyword id="KW-0501">Molybdenum cofactor biosynthesis</keyword>
<feature type="chain" id="PRO_1000213990" description="Cyclic pyranopterin monophosphate synthase">
    <location>
        <begin position="1"/>
        <end position="173"/>
    </location>
</feature>
<feature type="region of interest" description="Disordered" evidence="2">
    <location>
        <begin position="152"/>
        <end position="173"/>
    </location>
</feature>
<feature type="compositionally biased region" description="Polar residues" evidence="2">
    <location>
        <begin position="162"/>
        <end position="173"/>
    </location>
</feature>
<feature type="active site" evidence="1">
    <location>
        <position position="132"/>
    </location>
</feature>
<feature type="binding site" evidence="1">
    <location>
        <begin position="75"/>
        <end position="77"/>
    </location>
    <ligand>
        <name>substrate</name>
    </ligand>
</feature>
<feature type="binding site" evidence="1">
    <location>
        <begin position="117"/>
        <end position="118"/>
    </location>
    <ligand>
        <name>substrate</name>
    </ligand>
</feature>
<comment type="function">
    <text evidence="1">Catalyzes the conversion of (8S)-3',8-cyclo-7,8-dihydroguanosine 5'-triphosphate to cyclic pyranopterin monophosphate (cPMP).</text>
</comment>
<comment type="catalytic activity">
    <reaction evidence="1">
        <text>(8S)-3',8-cyclo-7,8-dihydroguanosine 5'-triphosphate = cyclic pyranopterin phosphate + diphosphate</text>
        <dbReference type="Rhea" id="RHEA:49580"/>
        <dbReference type="ChEBI" id="CHEBI:33019"/>
        <dbReference type="ChEBI" id="CHEBI:59648"/>
        <dbReference type="ChEBI" id="CHEBI:131766"/>
        <dbReference type="EC" id="4.6.1.17"/>
    </reaction>
</comment>
<comment type="pathway">
    <text evidence="1">Cofactor biosynthesis; molybdopterin biosynthesis.</text>
</comment>
<comment type="subunit">
    <text evidence="1">Homohexamer; trimer of dimers.</text>
</comment>
<comment type="similarity">
    <text evidence="1">Belongs to the MoaC family.</text>
</comment>
<proteinExistence type="inferred from homology"/>
<reference key="1">
    <citation type="submission" date="2009-06" db="EMBL/GenBank/DDBJ databases">
        <title>Complete sequence of chromosome of Geopacillus sp. WCH70.</title>
        <authorList>
            <consortium name="US DOE Joint Genome Institute"/>
            <person name="Lucas S."/>
            <person name="Copeland A."/>
            <person name="Lapidus A."/>
            <person name="Glavina del Rio T."/>
            <person name="Dalin E."/>
            <person name="Tice H."/>
            <person name="Bruce D."/>
            <person name="Goodwin L."/>
            <person name="Pitluck S."/>
            <person name="Chertkov O."/>
            <person name="Brettin T."/>
            <person name="Detter J.C."/>
            <person name="Han C."/>
            <person name="Larimer F."/>
            <person name="Land M."/>
            <person name="Hauser L."/>
            <person name="Kyrpides N."/>
            <person name="Mikhailova N."/>
            <person name="Brumm P."/>
            <person name="Mead D.A."/>
            <person name="Richardson P."/>
        </authorList>
    </citation>
    <scope>NUCLEOTIDE SEQUENCE [LARGE SCALE GENOMIC DNA]</scope>
    <source>
        <strain>WCH70</strain>
    </source>
</reference>
<organism>
    <name type="scientific">Geobacillus sp. (strain WCH70)</name>
    <dbReference type="NCBI Taxonomy" id="471223"/>
    <lineage>
        <taxon>Bacteria</taxon>
        <taxon>Bacillati</taxon>
        <taxon>Bacillota</taxon>
        <taxon>Bacilli</taxon>
        <taxon>Bacillales</taxon>
        <taxon>Anoxybacillaceae</taxon>
        <taxon>Geobacillus</taxon>
    </lineage>
</organism>
<gene>
    <name evidence="1" type="primary">moaC</name>
    <name type="ordered locus">GWCH70_0223</name>
</gene>
<protein>
    <recommendedName>
        <fullName evidence="1">Cyclic pyranopterin monophosphate synthase</fullName>
        <ecNumber evidence="1">4.6.1.17</ecNumber>
    </recommendedName>
    <alternativeName>
        <fullName evidence="1">Molybdenum cofactor biosynthesis protein C</fullName>
    </alternativeName>
</protein>
<dbReference type="EC" id="4.6.1.17" evidence="1"/>
<dbReference type="EMBL" id="CP001638">
    <property type="protein sequence ID" value="ACS23154.1"/>
    <property type="molecule type" value="Genomic_DNA"/>
</dbReference>
<dbReference type="SMR" id="C5D4E6"/>
<dbReference type="STRING" id="471223.GWCH70_0223"/>
<dbReference type="KEGG" id="gwc:GWCH70_0223"/>
<dbReference type="eggNOG" id="COG0315">
    <property type="taxonomic scope" value="Bacteria"/>
</dbReference>
<dbReference type="HOGENOM" id="CLU_074693_1_1_9"/>
<dbReference type="OrthoDB" id="9794429at2"/>
<dbReference type="UniPathway" id="UPA00344"/>
<dbReference type="GO" id="GO:0061799">
    <property type="term" value="F:cyclic pyranopterin monophosphate synthase activity"/>
    <property type="evidence" value="ECO:0007669"/>
    <property type="project" value="UniProtKB-UniRule"/>
</dbReference>
<dbReference type="GO" id="GO:0061798">
    <property type="term" value="F:GTP 3',8'-cyclase activity"/>
    <property type="evidence" value="ECO:0007669"/>
    <property type="project" value="TreeGrafter"/>
</dbReference>
<dbReference type="GO" id="GO:0006777">
    <property type="term" value="P:Mo-molybdopterin cofactor biosynthetic process"/>
    <property type="evidence" value="ECO:0007669"/>
    <property type="project" value="UniProtKB-UniRule"/>
</dbReference>
<dbReference type="CDD" id="cd01420">
    <property type="entry name" value="MoaC_PE"/>
    <property type="match status" value="1"/>
</dbReference>
<dbReference type="Gene3D" id="3.30.70.640">
    <property type="entry name" value="Molybdopterin cofactor biosynthesis C (MoaC) domain"/>
    <property type="match status" value="1"/>
</dbReference>
<dbReference type="HAMAP" id="MF_01224_B">
    <property type="entry name" value="MoaC_B"/>
    <property type="match status" value="1"/>
</dbReference>
<dbReference type="InterPro" id="IPR023045">
    <property type="entry name" value="MoaC"/>
</dbReference>
<dbReference type="InterPro" id="IPR047594">
    <property type="entry name" value="MoaC_bact/euk"/>
</dbReference>
<dbReference type="InterPro" id="IPR036522">
    <property type="entry name" value="MoaC_sf"/>
</dbReference>
<dbReference type="InterPro" id="IPR050105">
    <property type="entry name" value="MoCo_biosynth_MoaA/MoaC"/>
</dbReference>
<dbReference type="InterPro" id="IPR002820">
    <property type="entry name" value="Mopterin_CF_biosynth-C_dom"/>
</dbReference>
<dbReference type="NCBIfam" id="TIGR00581">
    <property type="entry name" value="moaC"/>
    <property type="match status" value="1"/>
</dbReference>
<dbReference type="NCBIfam" id="NF006870">
    <property type="entry name" value="PRK09364.1"/>
    <property type="match status" value="1"/>
</dbReference>
<dbReference type="PANTHER" id="PTHR22960:SF0">
    <property type="entry name" value="MOLYBDENUM COFACTOR BIOSYNTHESIS PROTEIN 1"/>
    <property type="match status" value="1"/>
</dbReference>
<dbReference type="PANTHER" id="PTHR22960">
    <property type="entry name" value="MOLYBDOPTERIN COFACTOR SYNTHESIS PROTEIN A"/>
    <property type="match status" value="1"/>
</dbReference>
<dbReference type="Pfam" id="PF01967">
    <property type="entry name" value="MoaC"/>
    <property type="match status" value="1"/>
</dbReference>
<dbReference type="SUPFAM" id="SSF55040">
    <property type="entry name" value="Molybdenum cofactor biosynthesis protein C, MoaC"/>
    <property type="match status" value="1"/>
</dbReference>